<organism>
    <name type="scientific">Halothiobacillus neapolitanus (strain ATCC 23641 / c2)</name>
    <name type="common">Thiobacillus neapolitanus</name>
    <dbReference type="NCBI Taxonomy" id="555778"/>
    <lineage>
        <taxon>Bacteria</taxon>
        <taxon>Pseudomonadati</taxon>
        <taxon>Pseudomonadota</taxon>
        <taxon>Gammaproteobacteria</taxon>
        <taxon>Chromatiales</taxon>
        <taxon>Halothiobacillaceae</taxon>
        <taxon>Halothiobacillus</taxon>
    </lineage>
</organism>
<keyword id="KW-0997">Cell inner membrane</keyword>
<keyword id="KW-1003">Cell membrane</keyword>
<keyword id="KW-0472">Membrane</keyword>
<keyword id="KW-0479">Metal-binding</keyword>
<keyword id="KW-1185">Reference proteome</keyword>
<keyword id="KW-0813">Transport</keyword>
<keyword id="KW-0862">Zinc</keyword>
<name>DABA2_HALNC</name>
<proteinExistence type="evidence at protein level"/>
<comment type="function">
    <text evidence="2 7">Part of an energy-coupled inorganic carbon pump; its substrate may be carbon dioxide. Expression of both dabA2 and dabB2 (DAB2) restores growth in ambient air to E.coli deleted of its carbonic anhydrase genes (called CAfree, deletion of 'can' and 'cynT'); neither dabA2 or dabB2 alone is sufficient. Rescue is pH-independent, suggesting it transports CO(2) and not carbonate ions. Together the genes allow greater than normal uptake of inorganic carbon by E.coli (PubMed:31406332). Uptake of carbon dioxide rather than bicarbonate has been suggested based on kinetic calculations (Probable).</text>
</comment>
<comment type="cofactor">
    <cofactor evidence="1 2">
        <name>Zn(2+)</name>
        <dbReference type="ChEBI" id="CHEBI:29105"/>
    </cofactor>
</comment>
<comment type="activity regulation">
    <text evidence="2 3">Uptake of inorganic carbon by cells in the presence of thiosulphate is fully inhibited by the uncouplers carbonyl cyanide m-chlorophenyl hydrazone (CCCP), carbonyl cyanide p-trifluoromethoxyphenyl hydrazone (FCCP), S13 or SF6847. Not inhibited by the ATPase inhibitor N,N-dicyclohexylcarbodiimide (DCCD) (Ref.2). Inorganic carbon uptake is inhibited by the ionophore CCCP, suggesting uptake is coupled to a cation gradient (PubMed:31406332).</text>
</comment>
<comment type="subunit">
    <text evidence="2">Forms a complex with DabB2, possibly a heterodimer.</text>
</comment>
<comment type="subcellular location">
    <subcellularLocation>
        <location evidence="1 6">Cell inner membrane</location>
        <topology evidence="1 6">Peripheral membrane protein</topology>
        <orientation evidence="6">Cytoplasmic side</orientation>
    </subcellularLocation>
</comment>
<comment type="disruption phenotype">
    <text evidence="2">Required for growth in ambient air.</text>
</comment>
<comment type="similarity">
    <text evidence="1 5">Belongs to the inorganic carbon transporter (TC 9.A.2) DabA family.</text>
</comment>
<dbReference type="EMBL" id="CP001801">
    <property type="protein sequence ID" value="ACX95074.1"/>
    <property type="molecule type" value="Genomic_DNA"/>
</dbReference>
<dbReference type="RefSeq" id="WP_012823110.1">
    <property type="nucleotide sequence ID" value="NC_013422.1"/>
</dbReference>
<dbReference type="STRING" id="555778.Hneap_0211"/>
<dbReference type="TCDB" id="9.A.2.1.2">
    <property type="family name" value="the putative dissolved inorganic carbon concentrating transporter (dic-ct) family"/>
</dbReference>
<dbReference type="KEGG" id="hna:Hneap_0211"/>
<dbReference type="eggNOG" id="COG3002">
    <property type="taxonomic scope" value="Bacteria"/>
</dbReference>
<dbReference type="HOGENOM" id="CLU_009885_1_0_6"/>
<dbReference type="OrthoDB" id="9805101at2"/>
<dbReference type="Proteomes" id="UP000009102">
    <property type="component" value="Chromosome"/>
</dbReference>
<dbReference type="GO" id="GO:0005886">
    <property type="term" value="C:plasma membrane"/>
    <property type="evidence" value="ECO:0007669"/>
    <property type="project" value="UniProtKB-SubCell"/>
</dbReference>
<dbReference type="GO" id="GO:0008270">
    <property type="term" value="F:zinc ion binding"/>
    <property type="evidence" value="ECO:0007669"/>
    <property type="project" value="UniProtKB-UniRule"/>
</dbReference>
<dbReference type="HAMAP" id="MF_01871">
    <property type="entry name" value="DabA"/>
    <property type="match status" value="1"/>
</dbReference>
<dbReference type="InterPro" id="IPR018752">
    <property type="entry name" value="DabA"/>
</dbReference>
<dbReference type="PANTHER" id="PTHR38344:SF1">
    <property type="entry name" value="INORGANIC CARBON TRANSPORTER SUBUNIT DABA-RELATED"/>
    <property type="match status" value="1"/>
</dbReference>
<dbReference type="PANTHER" id="PTHR38344">
    <property type="entry name" value="UPF0753 PROTEIN AQ_863"/>
    <property type="match status" value="1"/>
</dbReference>
<dbReference type="Pfam" id="PF10070">
    <property type="entry name" value="DabA"/>
    <property type="match status" value="1"/>
</dbReference>
<evidence type="ECO:0000255" key="1">
    <source>
        <dbReference type="HAMAP-Rule" id="MF_01871"/>
    </source>
</evidence>
<evidence type="ECO:0000269" key="2">
    <source>
    </source>
</evidence>
<evidence type="ECO:0000269" key="3">
    <source ref="2"/>
</evidence>
<evidence type="ECO:0000303" key="4">
    <source>
    </source>
</evidence>
<evidence type="ECO:0000305" key="5"/>
<evidence type="ECO:0000305" key="6">
    <source>
    </source>
</evidence>
<evidence type="ECO:0000305" key="7">
    <source ref="2"/>
</evidence>
<evidence type="ECO:0000312" key="8">
    <source>
        <dbReference type="EMBL" id="ACX95074.1"/>
    </source>
</evidence>
<feature type="chain" id="PRO_0000453154" description="Probable inorganic carbon transporter subunit DabA2">
    <location>
        <begin position="1"/>
        <end position="827"/>
    </location>
</feature>
<feature type="binding site" evidence="1 6">
    <location>
        <position position="351"/>
    </location>
    <ligand>
        <name>Zn(2+)</name>
        <dbReference type="ChEBI" id="CHEBI:29105"/>
    </ligand>
</feature>
<feature type="binding site" evidence="1 6">
    <location>
        <position position="353"/>
    </location>
    <ligand>
        <name>Zn(2+)</name>
        <dbReference type="ChEBI" id="CHEBI:29105"/>
    </ligand>
</feature>
<feature type="binding site" evidence="1 6">
    <location>
        <position position="524"/>
    </location>
    <ligand>
        <name>Zn(2+)</name>
        <dbReference type="ChEBI" id="CHEBI:29105"/>
    </ligand>
</feature>
<feature type="binding site" evidence="1 6">
    <location>
        <position position="539"/>
    </location>
    <ligand>
        <name>Zn(2+)</name>
        <dbReference type="ChEBI" id="CHEBI:29105"/>
    </ligand>
</feature>
<feature type="mutagenesis site" description="DAB2 no longer restores CAfree growth, still binds Zn(2+)." evidence="2">
    <original>C</original>
    <variation>A</variation>
    <location>
        <position position="351"/>
    </location>
</feature>
<feature type="mutagenesis site" description="DAB2 no longer restores CAfree growth, still binds Zn(2+)." evidence="2">
    <original>D</original>
    <variation>A</variation>
    <location>
        <position position="353"/>
    </location>
</feature>
<feature type="mutagenesis site" description="DAB2 no longer restores CAfree growth, still binds Zn(2+)." evidence="2">
    <original>H</original>
    <variation>A</variation>
    <location>
        <position position="524"/>
    </location>
</feature>
<feature type="mutagenesis site" description="DAB2 no longer restores CAfree growth." evidence="2">
    <original>C</original>
    <variation>A</variation>
    <location>
        <position position="539"/>
    </location>
</feature>
<reference key="1">
    <citation type="submission" date="2009-10" db="EMBL/GenBank/DDBJ databases">
        <title>Complete sequence of Halothiobacillus neapolitanus c2.</title>
        <authorList>
            <consortium name="US DOE Joint Genome Institute"/>
            <person name="Lucas S."/>
            <person name="Copeland A."/>
            <person name="Lapidus A."/>
            <person name="Glavina del Rio T."/>
            <person name="Tice H."/>
            <person name="Bruce D."/>
            <person name="Goodwin L."/>
            <person name="Pitluck S."/>
            <person name="Davenport K."/>
            <person name="Brettin T."/>
            <person name="Detter J.C."/>
            <person name="Han C."/>
            <person name="Tapia R."/>
            <person name="Larimer F."/>
            <person name="Land M."/>
            <person name="Hauser L."/>
            <person name="Kyrpides N."/>
            <person name="Mikhailova N."/>
            <person name="Kerfeld C."/>
            <person name="Cannon G."/>
            <person name="Heinhort S."/>
        </authorList>
    </citation>
    <scope>NUCLEOTIDE SEQUENCE [LARGE SCALE GENOMIC DNA]</scope>
    <source>
        <strain>ATCC 23641 / c2</strain>
    </source>
</reference>
<reference key="2">
    <citation type="journal article" date="1987" name="Arch. Microbiol.">
        <title>Energetic aspects of CO2 uptake in Thiobacillus neapolitanus.</title>
        <authorList>
            <person name="Holthuijzen Y.A."/>
            <person name="van Dissel-Emiliani F.F.M."/>
            <person name="Kuenen J.G."/>
            <person name="Konings W.N."/>
        </authorList>
    </citation>
    <scope>SUBSTRATE SPECIFICITY</scope>
    <scope>ACTIVITY REGULATION</scope>
    <source>
        <strain>DSM 15147 / CIP 104769 / NCIMB 8539 / c2 / X</strain>
    </source>
</reference>
<reference key="3">
    <citation type="journal article" date="2019" name="Nat. Microbiol.">
        <title>DABs are inorganic carbon pumps found throughout prokaryotic phyla.</title>
        <authorList>
            <person name="Desmarais J.J."/>
            <person name="Flamholz A.I."/>
            <person name="Blikstad C."/>
            <person name="Dugan E.J."/>
            <person name="Laughlin T.G."/>
            <person name="Oltrogge L.M."/>
            <person name="Chen A.W."/>
            <person name="Wetmore K."/>
            <person name="Diamond S."/>
            <person name="Wang J.Y."/>
            <person name="Savage D.F."/>
        </authorList>
    </citation>
    <scope>FUNCTION</scope>
    <scope>EXPRESSION IN ECOLI</scope>
    <scope>ACTIVITY REGULATION</scope>
    <scope>COFACTOR</scope>
    <scope>SUBUNIT</scope>
    <scope>SUBCELLULAR LOCATION</scope>
    <scope>DISRUPTION PHENOTYPE</scope>
    <scope>MUTAGENESIS OF CYS-351; ASP-353; HIS-524 AND CYS-539</scope>
    <source>
        <strain>ATCC 23641 / c2</strain>
    </source>
</reference>
<gene>
    <name evidence="1 4" type="primary">dabA2</name>
    <name evidence="8" type="ordered locus">Hneap_0211</name>
</gene>
<sequence length="827" mass="91617">MTTLTSLQRSEAQRNHIVDLIDKACLRIAPIWPLDSFVAVNPYLGLIDQPFDTVGRYLEQTVGESLFMDHGWFADKIAQGEITDDDLAQAAQQLDPSISLDTIKQQLAVHRQPAPALPLVTNELDRRDAPPVSEFVIEQVSQFMANYYDRGQALWHLPKEASASLFAQWRRYTLINRSASAVGLKQVRQHLLAVPSDAIDALFWALDQINLPESRLPDYLFTLLKTIGGWASWCRYLHFQAGLHGESQHDLRDLLIIRLVWVALVIKETSSAGRQQWRAKLNDWFDPAKLVASPSATATASTKAQSSRIDEILLAAAEQAFRRRINAGLNRQPADAPDQQAERPTVQAAFCIDVRSEVFRRHLEASSPGLETIGFAGFFGLPIDYCRMGESEARLQNPVLINPAYRAQETGDPAIAQHRHARQSRGAIWKQFKLSAASCFTFVESAGLSYVPRLLADSLGWHRSSLPPDAPGLTPEERARLHPQLVKLDGGALSTQEKVDLAEKVLRGLGLTHTFAPIVLLAGHGSSTTNNPHRAGLDCGACAGQAGDVNARVAVQLLNEAAVRLGLIERGIAIPRDTRFVAALHDTTTDHIELLDLDQSGIESDQLSSLTQALKQAGELTRLERLVTLEAQVDTVDAEKQATFRGRDWSQVRPEWGLAGNAAFIAAPRWRTRGLDLGGRAFLHDYDWRHDKEFGVLNVIMTAPLIVANWINLQYYGSTVDNLHQGAGNKVLHNVVGGTVGVIEGNGGDLRVGLAMQSLHDGEQWRHEPLRLSAYIEAPIAEIDKIIAGHDMLNALINNRWMHILHIDDNGIPHRRHAHGDWRPEPI</sequence>
<protein>
    <recommendedName>
        <fullName evidence="1 4">Probable inorganic carbon transporter subunit DabA2</fullName>
    </recommendedName>
</protein>
<accession>D0KWS7</accession>